<sequence>MESREDSFISKEKKSTMKKEKQAIASQRNRRRVIKNRGNGKRLIASLSQRKRRRIPRGRGNEKAVFAPSSLPNDVVEEIFLRLPVKAIIQLKSLSKQWRSTIESRSFEERHLKIVERSRVDFPQVMVMSEEYSLKGSKGNQPRPDTDIGFSTICLESASILSSTLITFPQGFQHRIYASESCDGLFCIHSLKTQAIYVVNPATRWFRQLPPARFQILMQKLYPTQDTWIDIKPVVCYTAFVKANDYKLVWLYNSDASNPNLGVTKCEVFDFRANAWRYLTCTPSYRIFPDQVPAATNGSIYWFTEPYNGEIKVVALDIHTETFRVLPKINPAIASSDPDHIDMCTLDNGLCMSKRESDTLVQEIWRLKSSEDSWEKVYTIDLLSCSSSSLSEFRDGFNWTRKDLVEPSTPVAICKDKKILLSHRYARNMIKYDPQIKSISLIYQPPLCRRYASYFQSLISHI</sequence>
<name>FB7_ARATH</name>
<feature type="chain" id="PRO_0000283286" description="Putative F-box protein At1g12855">
    <location>
        <begin position="1"/>
        <end position="462"/>
    </location>
</feature>
<feature type="domain" description="F-box" evidence="1">
    <location>
        <begin position="65"/>
        <end position="110"/>
    </location>
</feature>
<feature type="region of interest" description="Disordered" evidence="2">
    <location>
        <begin position="1"/>
        <end position="59"/>
    </location>
</feature>
<feature type="compositionally biased region" description="Basic and acidic residues" evidence="2">
    <location>
        <begin position="1"/>
        <end position="22"/>
    </location>
</feature>
<feature type="compositionally biased region" description="Basic residues" evidence="2">
    <location>
        <begin position="28"/>
        <end position="40"/>
    </location>
</feature>
<proteinExistence type="predicted"/>
<reference key="1">
    <citation type="journal article" date="2000" name="Nature">
        <title>Sequence and analysis of chromosome 1 of the plant Arabidopsis thaliana.</title>
        <authorList>
            <person name="Theologis A."/>
            <person name="Ecker J.R."/>
            <person name="Palm C.J."/>
            <person name="Federspiel N.A."/>
            <person name="Kaul S."/>
            <person name="White O."/>
            <person name="Alonso J."/>
            <person name="Altafi H."/>
            <person name="Araujo R."/>
            <person name="Bowman C.L."/>
            <person name="Brooks S.Y."/>
            <person name="Buehler E."/>
            <person name="Chan A."/>
            <person name="Chao Q."/>
            <person name="Chen H."/>
            <person name="Cheuk R.F."/>
            <person name="Chin C.W."/>
            <person name="Chung M.K."/>
            <person name="Conn L."/>
            <person name="Conway A.B."/>
            <person name="Conway A.R."/>
            <person name="Creasy T.H."/>
            <person name="Dewar K."/>
            <person name="Dunn P."/>
            <person name="Etgu P."/>
            <person name="Feldblyum T.V."/>
            <person name="Feng J.-D."/>
            <person name="Fong B."/>
            <person name="Fujii C.Y."/>
            <person name="Gill J.E."/>
            <person name="Goldsmith A.D."/>
            <person name="Haas B."/>
            <person name="Hansen N.F."/>
            <person name="Hughes B."/>
            <person name="Huizar L."/>
            <person name="Hunter J.L."/>
            <person name="Jenkins J."/>
            <person name="Johnson-Hopson C."/>
            <person name="Khan S."/>
            <person name="Khaykin E."/>
            <person name="Kim C.J."/>
            <person name="Koo H.L."/>
            <person name="Kremenetskaia I."/>
            <person name="Kurtz D.B."/>
            <person name="Kwan A."/>
            <person name="Lam B."/>
            <person name="Langin-Hooper S."/>
            <person name="Lee A."/>
            <person name="Lee J.M."/>
            <person name="Lenz C.A."/>
            <person name="Li J.H."/>
            <person name="Li Y.-P."/>
            <person name="Lin X."/>
            <person name="Liu S.X."/>
            <person name="Liu Z.A."/>
            <person name="Luros J.S."/>
            <person name="Maiti R."/>
            <person name="Marziali A."/>
            <person name="Militscher J."/>
            <person name="Miranda M."/>
            <person name="Nguyen M."/>
            <person name="Nierman W.C."/>
            <person name="Osborne B.I."/>
            <person name="Pai G."/>
            <person name="Peterson J."/>
            <person name="Pham P.K."/>
            <person name="Rizzo M."/>
            <person name="Rooney T."/>
            <person name="Rowley D."/>
            <person name="Sakano H."/>
            <person name="Salzberg S.L."/>
            <person name="Schwartz J.R."/>
            <person name="Shinn P."/>
            <person name="Southwick A.M."/>
            <person name="Sun H."/>
            <person name="Tallon L.J."/>
            <person name="Tambunga G."/>
            <person name="Toriumi M.J."/>
            <person name="Town C.D."/>
            <person name="Utterback T."/>
            <person name="Van Aken S."/>
            <person name="Vaysberg M."/>
            <person name="Vysotskaia V.S."/>
            <person name="Walker M."/>
            <person name="Wu D."/>
            <person name="Yu G."/>
            <person name="Fraser C.M."/>
            <person name="Venter J.C."/>
            <person name="Davis R.W."/>
        </authorList>
    </citation>
    <scope>NUCLEOTIDE SEQUENCE [LARGE SCALE GENOMIC DNA]</scope>
    <source>
        <strain>cv. Columbia</strain>
    </source>
</reference>
<reference key="2">
    <citation type="journal article" date="2017" name="Plant J.">
        <title>Araport11: a complete reannotation of the Arabidopsis thaliana reference genome.</title>
        <authorList>
            <person name="Cheng C.Y."/>
            <person name="Krishnakumar V."/>
            <person name="Chan A.P."/>
            <person name="Thibaud-Nissen F."/>
            <person name="Schobel S."/>
            <person name="Town C.D."/>
        </authorList>
    </citation>
    <scope>GENOME REANNOTATION</scope>
    <source>
        <strain>cv. Columbia</strain>
    </source>
</reference>
<evidence type="ECO:0000255" key="1">
    <source>
        <dbReference type="PROSITE-ProRule" id="PRU00080"/>
    </source>
</evidence>
<evidence type="ECO:0000256" key="2">
    <source>
        <dbReference type="SAM" id="MobiDB-lite"/>
    </source>
</evidence>
<gene>
    <name type="ordered locus">At1g12855</name>
    <name type="ORF">F13K23.11</name>
</gene>
<protein>
    <recommendedName>
        <fullName>Putative F-box protein At1g12855</fullName>
    </recommendedName>
</protein>
<keyword id="KW-1185">Reference proteome</keyword>
<organism>
    <name type="scientific">Arabidopsis thaliana</name>
    <name type="common">Mouse-ear cress</name>
    <dbReference type="NCBI Taxonomy" id="3702"/>
    <lineage>
        <taxon>Eukaryota</taxon>
        <taxon>Viridiplantae</taxon>
        <taxon>Streptophyta</taxon>
        <taxon>Embryophyta</taxon>
        <taxon>Tracheophyta</taxon>
        <taxon>Spermatophyta</taxon>
        <taxon>Magnoliopsida</taxon>
        <taxon>eudicotyledons</taxon>
        <taxon>Gunneridae</taxon>
        <taxon>Pentapetalae</taxon>
        <taxon>rosids</taxon>
        <taxon>malvids</taxon>
        <taxon>Brassicales</taxon>
        <taxon>Brassicaceae</taxon>
        <taxon>Camelineae</taxon>
        <taxon>Arabidopsis</taxon>
    </lineage>
</organism>
<accession>Q9LPW4</accession>
<dbReference type="EMBL" id="AC012187">
    <property type="protein sequence ID" value="AAF78491.1"/>
    <property type="molecule type" value="Genomic_DNA"/>
</dbReference>
<dbReference type="EMBL" id="CP002684">
    <property type="protein sequence ID" value="AEE28939.1"/>
    <property type="molecule type" value="Genomic_DNA"/>
</dbReference>
<dbReference type="PIR" id="B86262">
    <property type="entry name" value="B86262"/>
</dbReference>
<dbReference type="RefSeq" id="NP_001184976.1">
    <property type="nucleotide sequence ID" value="NM_001198047.2"/>
</dbReference>
<dbReference type="SMR" id="Q9LPW4"/>
<dbReference type="FunCoup" id="Q9LPW4">
    <property type="interactions" value="3"/>
</dbReference>
<dbReference type="PaxDb" id="3702-AT1G12855.1"/>
<dbReference type="EnsemblPlants" id="AT1G12855.1">
    <property type="protein sequence ID" value="AT1G12855.1"/>
    <property type="gene ID" value="AT1G12855"/>
</dbReference>
<dbReference type="GeneID" id="10723026"/>
<dbReference type="Gramene" id="AT1G12855.1">
    <property type="protein sequence ID" value="AT1G12855.1"/>
    <property type="gene ID" value="AT1G12855"/>
</dbReference>
<dbReference type="KEGG" id="ath:AT1G12855"/>
<dbReference type="Araport" id="AT1G12855"/>
<dbReference type="TAIR" id="AT1G12855"/>
<dbReference type="eggNOG" id="ENOG502T151">
    <property type="taxonomic scope" value="Eukaryota"/>
</dbReference>
<dbReference type="HOGENOM" id="CLU_027176_10_1_1"/>
<dbReference type="InParanoid" id="Q9LPW4"/>
<dbReference type="PRO" id="PR:Q9LPW4"/>
<dbReference type="Proteomes" id="UP000006548">
    <property type="component" value="Chromosome 1"/>
</dbReference>
<dbReference type="ExpressionAtlas" id="Q9LPW4">
    <property type="expression patterns" value="baseline and differential"/>
</dbReference>
<dbReference type="CDD" id="cd22157">
    <property type="entry name" value="F-box_AtFBW1-like"/>
    <property type="match status" value="1"/>
</dbReference>
<dbReference type="FunFam" id="2.120.10.80:FF:000273">
    <property type="entry name" value="F-box/LRR-repeat/kelch-repeat protein At1g09650"/>
    <property type="match status" value="1"/>
</dbReference>
<dbReference type="Gene3D" id="1.20.1280.50">
    <property type="match status" value="1"/>
</dbReference>
<dbReference type="Gene3D" id="2.120.10.80">
    <property type="entry name" value="Kelch-type beta propeller"/>
    <property type="match status" value="1"/>
</dbReference>
<dbReference type="InterPro" id="IPR017451">
    <property type="entry name" value="F-box-assoc_interact_dom"/>
</dbReference>
<dbReference type="InterPro" id="IPR036047">
    <property type="entry name" value="F-box-like_dom_sf"/>
</dbReference>
<dbReference type="InterPro" id="IPR001810">
    <property type="entry name" value="F-box_dom"/>
</dbReference>
<dbReference type="InterPro" id="IPR011043">
    <property type="entry name" value="Gal_Oxase/kelch_b-propeller"/>
</dbReference>
<dbReference type="InterPro" id="IPR015915">
    <property type="entry name" value="Kelch-typ_b-propeller"/>
</dbReference>
<dbReference type="InterPro" id="IPR005174">
    <property type="entry name" value="KIB1-4_b-propeller"/>
</dbReference>
<dbReference type="InterPro" id="IPR050796">
    <property type="entry name" value="SCF_F-box_component"/>
</dbReference>
<dbReference type="NCBIfam" id="TIGR01640">
    <property type="entry name" value="F_box_assoc_1"/>
    <property type="match status" value="1"/>
</dbReference>
<dbReference type="PANTHER" id="PTHR31672">
    <property type="entry name" value="BNACNNG10540D PROTEIN"/>
    <property type="match status" value="1"/>
</dbReference>
<dbReference type="PANTHER" id="PTHR31672:SF13">
    <property type="entry name" value="F-BOX PROTEIN CPR30-LIKE"/>
    <property type="match status" value="1"/>
</dbReference>
<dbReference type="Pfam" id="PF03478">
    <property type="entry name" value="Beta-prop_KIB1-4"/>
    <property type="match status" value="1"/>
</dbReference>
<dbReference type="Pfam" id="PF00646">
    <property type="entry name" value="F-box"/>
    <property type="match status" value="1"/>
</dbReference>
<dbReference type="SMART" id="SM00256">
    <property type="entry name" value="FBOX"/>
    <property type="match status" value="1"/>
</dbReference>
<dbReference type="SUPFAM" id="SSF81383">
    <property type="entry name" value="F-box domain"/>
    <property type="match status" value="1"/>
</dbReference>
<dbReference type="SUPFAM" id="SSF50965">
    <property type="entry name" value="Galactose oxidase, central domain"/>
    <property type="match status" value="1"/>
</dbReference>
<dbReference type="PROSITE" id="PS50181">
    <property type="entry name" value="FBOX"/>
    <property type="match status" value="1"/>
</dbReference>